<keyword id="KW-0539">Nucleus</keyword>
<keyword id="KW-1185">Reference proteome</keyword>
<keyword id="KW-0690">Ribosome biogenesis</keyword>
<keyword id="KW-0698">rRNA processing</keyword>
<reference key="1">
    <citation type="journal article" date="2008" name="Nature">
        <title>The genome of Laccaria bicolor provides insights into mycorrhizal symbiosis.</title>
        <authorList>
            <person name="Martin F."/>
            <person name="Aerts A."/>
            <person name="Ahren D."/>
            <person name="Brun A."/>
            <person name="Danchin E.G.J."/>
            <person name="Duchaussoy F."/>
            <person name="Gibon J."/>
            <person name="Kohler A."/>
            <person name="Lindquist E."/>
            <person name="Pereda V."/>
            <person name="Salamov A."/>
            <person name="Shapiro H.J."/>
            <person name="Wuyts J."/>
            <person name="Blaudez D."/>
            <person name="Buee M."/>
            <person name="Brokstein P."/>
            <person name="Canbaeck B."/>
            <person name="Cohen D."/>
            <person name="Courty P.E."/>
            <person name="Coutinho P.M."/>
            <person name="Delaruelle C."/>
            <person name="Detter J.C."/>
            <person name="Deveau A."/>
            <person name="DiFazio S."/>
            <person name="Duplessis S."/>
            <person name="Fraissinet-Tachet L."/>
            <person name="Lucic E."/>
            <person name="Frey-Klett P."/>
            <person name="Fourrey C."/>
            <person name="Feussner I."/>
            <person name="Gay G."/>
            <person name="Grimwood J."/>
            <person name="Hoegger P.J."/>
            <person name="Jain P."/>
            <person name="Kilaru S."/>
            <person name="Labbe J."/>
            <person name="Lin Y.C."/>
            <person name="Legue V."/>
            <person name="Le Tacon F."/>
            <person name="Marmeisse R."/>
            <person name="Melayah D."/>
            <person name="Montanini B."/>
            <person name="Muratet M."/>
            <person name="Nehls U."/>
            <person name="Niculita-Hirzel H."/>
            <person name="Oudot-Le Secq M.P."/>
            <person name="Peter M."/>
            <person name="Quesneville H."/>
            <person name="Rajashekar B."/>
            <person name="Reich M."/>
            <person name="Rouhier N."/>
            <person name="Schmutz J."/>
            <person name="Yin T."/>
            <person name="Chalot M."/>
            <person name="Henrissat B."/>
            <person name="Kuees U."/>
            <person name="Lucas S."/>
            <person name="Van de Peer Y."/>
            <person name="Podila G.K."/>
            <person name="Polle A."/>
            <person name="Pukkila P.J."/>
            <person name="Richardson P.M."/>
            <person name="Rouze P."/>
            <person name="Sanders I.R."/>
            <person name="Stajich J.E."/>
            <person name="Tunlid A."/>
            <person name="Tuskan G."/>
            <person name="Grigoriev I.V."/>
        </authorList>
    </citation>
    <scope>NUCLEOTIDE SEQUENCE [LARGE SCALE GENOMIC DNA]</scope>
    <source>
        <strain>S238N-H82 / ATCC MYA-4686</strain>
    </source>
</reference>
<gene>
    <name evidence="1" type="primary">NOP7</name>
    <name type="ORF">LACBIDRAFT_243679</name>
</gene>
<name>PESC_LACBS</name>
<protein>
    <recommendedName>
        <fullName evidence="1">Pescadillo homolog</fullName>
    </recommendedName>
    <alternativeName>
        <fullName evidence="1">Nucleolar protein 7 homolog</fullName>
    </alternativeName>
</protein>
<evidence type="ECO:0000255" key="1">
    <source>
        <dbReference type="HAMAP-Rule" id="MF_03028"/>
    </source>
</evidence>
<evidence type="ECO:0000256" key="2">
    <source>
        <dbReference type="SAM" id="MobiDB-lite"/>
    </source>
</evidence>
<organism>
    <name type="scientific">Laccaria bicolor (strain S238N-H82 / ATCC MYA-4686)</name>
    <name type="common">Bicoloured deceiver</name>
    <name type="synonym">Laccaria laccata var. bicolor</name>
    <dbReference type="NCBI Taxonomy" id="486041"/>
    <lineage>
        <taxon>Eukaryota</taxon>
        <taxon>Fungi</taxon>
        <taxon>Dikarya</taxon>
        <taxon>Basidiomycota</taxon>
        <taxon>Agaricomycotina</taxon>
        <taxon>Agaricomycetes</taxon>
        <taxon>Agaricomycetidae</taxon>
        <taxon>Agaricales</taxon>
        <taxon>Agaricineae</taxon>
        <taxon>Hydnangiaceae</taxon>
        <taxon>Laccaria</taxon>
    </lineage>
</organism>
<feature type="chain" id="PRO_0000370493" description="Pescadillo homolog">
    <location>
        <begin position="1"/>
        <end position="606"/>
    </location>
</feature>
<feature type="domain" description="BRCT" evidence="1">
    <location>
        <begin position="346"/>
        <end position="447"/>
    </location>
</feature>
<feature type="region of interest" description="Disordered" evidence="2">
    <location>
        <begin position="461"/>
        <end position="497"/>
    </location>
</feature>
<feature type="compositionally biased region" description="Acidic residues" evidence="2">
    <location>
        <begin position="479"/>
        <end position="496"/>
    </location>
</feature>
<comment type="function">
    <text evidence="1">Component of the NOP7 complex, which is required for maturation of the 25S and 5.8S ribosomal RNAs and formation of the 60S ribosome.</text>
</comment>
<comment type="subunit">
    <text evidence="1">Component of the NOP7 complex, composed of ERB1, NOP7 and YTM1. The complex is held together by ERB1, which interacts with NOP7 via its N-terminal domain and with YTM1 via a high-affinity interaction between the seven-bladed beta-propeller domains of the 2 proteins. The NOP7 complex associates with the 66S pre-ribosome.</text>
</comment>
<comment type="subcellular location">
    <subcellularLocation>
        <location evidence="1">Nucleus</location>
        <location evidence="1">Nucleolus</location>
    </subcellularLocation>
    <subcellularLocation>
        <location evidence="1">Nucleus</location>
        <location evidence="1">Nucleoplasm</location>
    </subcellularLocation>
</comment>
<comment type="similarity">
    <text evidence="1">Belongs to the pescadillo family.</text>
</comment>
<accession>B0CQL7</accession>
<sequence length="606" mass="67691">MGRLKQKGKAGAAKNYVTRTSAIKKLQCSLADFRRLCILKGIFPREPRSRKRANKGSSAPTSFYYAKDIAYLAHEPVLKKLREHKAFAKKLSRALGRGEWSSAKNLEENKPIYRLDHIIKERYPTFIDAVRDIDDALCMVFLFASLPTTTRLPPELMENCSRLAAEWQLYIMRSQSLRKVFLSIKGVYYQAEIMDQTVTWLVPYQFTQNIPADVDVRVMLTFLELYQTLLGFILFKLYTDAGLVYPPPLDAKKDESAAGIGAFSLQDITQPAAQPSRAKAVELDGRKISTKDVRQTIKNIEASHSTHDPDVEMSNPETATTEVEEEFISQASLSNPGLISSLPQSLSTSLFSPYTFFLSREVSRPIFEFMVRSFGGKIGWSASFGSGSPFEETDETITHVIIDRPLVGREESPSQRELRLRRKYVQPQWIVDCINSGKILLEGPYGQGKTLPPHLSPFGEYEGAYDPAAGPLGPSGVEQESESEADEVSEEDEEDQGGLVQAAVEAVTGDPVELRAAELAAEAAGVDYGTFEAKVKKLNKKQMKKPITDGVEDGEKDMNKMMMSNKQKKLYEKMKYSQKKKEIEVSKFGISLDAVLTSSIAGDTDY</sequence>
<proteinExistence type="inferred from homology"/>
<dbReference type="EMBL" id="DS547091">
    <property type="protein sequence ID" value="EDR15668.1"/>
    <property type="molecule type" value="Genomic_DNA"/>
</dbReference>
<dbReference type="RefSeq" id="XP_001873876.1">
    <property type="nucleotide sequence ID" value="XM_001873841.1"/>
</dbReference>
<dbReference type="SMR" id="B0CQL7"/>
<dbReference type="FunCoup" id="B0CQL7">
    <property type="interactions" value="745"/>
</dbReference>
<dbReference type="STRING" id="486041.B0CQL7"/>
<dbReference type="GeneID" id="6069513"/>
<dbReference type="KEGG" id="lbc:LACBIDRAFT_243679"/>
<dbReference type="HOGENOM" id="CLU_019619_1_1_1"/>
<dbReference type="InParanoid" id="B0CQL7"/>
<dbReference type="OrthoDB" id="10264910at2759"/>
<dbReference type="Proteomes" id="UP000001194">
    <property type="component" value="Unassembled WGS sequence"/>
</dbReference>
<dbReference type="GO" id="GO:0005654">
    <property type="term" value="C:nucleoplasm"/>
    <property type="evidence" value="ECO:0007669"/>
    <property type="project" value="UniProtKB-SubCell"/>
</dbReference>
<dbReference type="GO" id="GO:0070545">
    <property type="term" value="C:PeBoW complex"/>
    <property type="evidence" value="ECO:0007669"/>
    <property type="project" value="TreeGrafter"/>
</dbReference>
<dbReference type="GO" id="GO:0030687">
    <property type="term" value="C:preribosome, large subunit precursor"/>
    <property type="evidence" value="ECO:0007669"/>
    <property type="project" value="UniProtKB-UniRule"/>
</dbReference>
<dbReference type="GO" id="GO:0043021">
    <property type="term" value="F:ribonucleoprotein complex binding"/>
    <property type="evidence" value="ECO:0007669"/>
    <property type="project" value="UniProtKB-UniRule"/>
</dbReference>
<dbReference type="GO" id="GO:0003723">
    <property type="term" value="F:RNA binding"/>
    <property type="evidence" value="ECO:0007669"/>
    <property type="project" value="TreeGrafter"/>
</dbReference>
<dbReference type="GO" id="GO:0000466">
    <property type="term" value="P:maturation of 5.8S rRNA from tricistronic rRNA transcript (SSU-rRNA, 5.8S rRNA, LSU-rRNA)"/>
    <property type="evidence" value="ECO:0007669"/>
    <property type="project" value="UniProtKB-UniRule"/>
</dbReference>
<dbReference type="GO" id="GO:0000463">
    <property type="term" value="P:maturation of LSU-rRNA from tricistronic rRNA transcript (SSU-rRNA, 5.8S rRNA, LSU-rRNA)"/>
    <property type="evidence" value="ECO:0007669"/>
    <property type="project" value="UniProtKB-UniRule"/>
</dbReference>
<dbReference type="CDD" id="cd17709">
    <property type="entry name" value="BRCT_pescadillo_like"/>
    <property type="match status" value="1"/>
</dbReference>
<dbReference type="Gene3D" id="3.40.50.10190">
    <property type="entry name" value="BRCT domain"/>
    <property type="match status" value="1"/>
</dbReference>
<dbReference type="HAMAP" id="MF_03028">
    <property type="entry name" value="Pescadillo"/>
    <property type="match status" value="1"/>
</dbReference>
<dbReference type="InterPro" id="IPR001357">
    <property type="entry name" value="BRCT_dom"/>
</dbReference>
<dbReference type="InterPro" id="IPR036420">
    <property type="entry name" value="BRCT_dom_sf"/>
</dbReference>
<dbReference type="InterPro" id="IPR010613">
    <property type="entry name" value="PES"/>
</dbReference>
<dbReference type="PANTHER" id="PTHR12221">
    <property type="entry name" value="PESCADILLO - RELATED"/>
    <property type="match status" value="1"/>
</dbReference>
<dbReference type="PANTHER" id="PTHR12221:SF6">
    <property type="entry name" value="PESCADILLO HOMOLOG"/>
    <property type="match status" value="1"/>
</dbReference>
<dbReference type="Pfam" id="PF00533">
    <property type="entry name" value="BRCT"/>
    <property type="match status" value="1"/>
</dbReference>
<dbReference type="Pfam" id="PF06732">
    <property type="entry name" value="Pescadillo_N"/>
    <property type="match status" value="1"/>
</dbReference>
<dbReference type="SMART" id="SM00292">
    <property type="entry name" value="BRCT"/>
    <property type="match status" value="1"/>
</dbReference>
<dbReference type="SUPFAM" id="SSF52113">
    <property type="entry name" value="BRCT domain"/>
    <property type="match status" value="1"/>
</dbReference>
<dbReference type="PROSITE" id="PS50172">
    <property type="entry name" value="BRCT"/>
    <property type="match status" value="1"/>
</dbReference>